<organism>
    <name type="scientific">Treponema pallidum (strain Nichols)</name>
    <dbReference type="NCBI Taxonomy" id="243276"/>
    <lineage>
        <taxon>Bacteria</taxon>
        <taxon>Pseudomonadati</taxon>
        <taxon>Spirochaetota</taxon>
        <taxon>Spirochaetia</taxon>
        <taxon>Spirochaetales</taxon>
        <taxon>Treponemataceae</taxon>
        <taxon>Treponema</taxon>
    </lineage>
</organism>
<proteinExistence type="predicted"/>
<dbReference type="EMBL" id="AE000520">
    <property type="protein sequence ID" value="AAC65788.1"/>
    <property type="molecule type" value="Genomic_DNA"/>
</dbReference>
<dbReference type="PIR" id="G71278">
    <property type="entry name" value="G71278"/>
</dbReference>
<dbReference type="IntAct" id="O83793">
    <property type="interactions" value="5"/>
</dbReference>
<dbReference type="STRING" id="243276.TP_0818"/>
<dbReference type="EnsemblBacteria" id="AAC65788">
    <property type="protein sequence ID" value="AAC65788"/>
    <property type="gene ID" value="TP_0818"/>
</dbReference>
<dbReference type="KEGG" id="tpa:TP_0818"/>
<dbReference type="KEGG" id="tpw:TPANIC_0818"/>
<dbReference type="HOGENOM" id="CLU_3123856_0_0_12"/>
<dbReference type="Proteomes" id="UP000000811">
    <property type="component" value="Chromosome"/>
</dbReference>
<sequence length="50" mass="5572">MEYRGGWYSYFLCGVLSGKGARRAGAIERVENLYAFFFACYHAPTSGGLK</sequence>
<keyword id="KW-1185">Reference proteome</keyword>
<gene>
    <name type="ordered locus">TP_0818</name>
</gene>
<protein>
    <recommendedName>
        <fullName>Uncharacterized protein TP_0818</fullName>
    </recommendedName>
</protein>
<name>Y818_TREPA</name>
<accession>O83793</accession>
<reference key="1">
    <citation type="journal article" date="1998" name="Science">
        <title>Complete genome sequence of Treponema pallidum, the syphilis spirochete.</title>
        <authorList>
            <person name="Fraser C.M."/>
            <person name="Norris S.J."/>
            <person name="Weinstock G.M."/>
            <person name="White O."/>
            <person name="Sutton G.G."/>
            <person name="Dodson R.J."/>
            <person name="Gwinn M.L."/>
            <person name="Hickey E.K."/>
            <person name="Clayton R.A."/>
            <person name="Ketchum K.A."/>
            <person name="Sodergren E."/>
            <person name="Hardham J.M."/>
            <person name="McLeod M.P."/>
            <person name="Salzberg S.L."/>
            <person name="Peterson J.D."/>
            <person name="Khalak H.G."/>
            <person name="Richardson D.L."/>
            <person name="Howell J.K."/>
            <person name="Chidambaram M."/>
            <person name="Utterback T.R."/>
            <person name="McDonald L.A."/>
            <person name="Artiach P."/>
            <person name="Bowman C."/>
            <person name="Cotton M.D."/>
            <person name="Fujii C."/>
            <person name="Garland S.A."/>
            <person name="Hatch B."/>
            <person name="Horst K."/>
            <person name="Roberts K.M."/>
            <person name="Sandusky M."/>
            <person name="Weidman J.F."/>
            <person name="Smith H.O."/>
            <person name="Venter J.C."/>
        </authorList>
    </citation>
    <scope>NUCLEOTIDE SEQUENCE [LARGE SCALE GENOMIC DNA]</scope>
    <source>
        <strain>Nichols</strain>
    </source>
</reference>
<feature type="chain" id="PRO_0000202334" description="Uncharacterized protein TP_0818">
    <location>
        <begin position="1"/>
        <end position="50"/>
    </location>
</feature>